<gene>
    <name evidence="1" type="primary">pal</name>
    <name type="synonym">omp16</name>
    <name type="ordered locus">BR1695</name>
    <name type="ordered locus">BS1330_I1689</name>
</gene>
<organism>
    <name type="scientific">Brucella suis biovar 1 (strain 1330)</name>
    <dbReference type="NCBI Taxonomy" id="204722"/>
    <lineage>
        <taxon>Bacteria</taxon>
        <taxon>Pseudomonadati</taxon>
        <taxon>Pseudomonadota</taxon>
        <taxon>Alphaproteobacteria</taxon>
        <taxon>Hyphomicrobiales</taxon>
        <taxon>Brucellaceae</taxon>
        <taxon>Brucella/Ochrobactrum group</taxon>
        <taxon>Brucella</taxon>
    </lineage>
</organism>
<name>PAL_BRUSU</name>
<proteinExistence type="evidence at protein level"/>
<keyword id="KW-0131">Cell cycle</keyword>
<keyword id="KW-0132">Cell division</keyword>
<keyword id="KW-0998">Cell outer membrane</keyword>
<keyword id="KW-0449">Lipoprotein</keyword>
<keyword id="KW-0472">Membrane</keyword>
<keyword id="KW-0564">Palmitate</keyword>
<keyword id="KW-0732">Signal</keyword>
<reference key="1">
    <citation type="journal article" date="2002" name="Proc. Natl. Acad. Sci. U.S.A.">
        <title>The Brucella suis genome reveals fundamental similarities between animal and plant pathogens and symbionts.</title>
        <authorList>
            <person name="Paulsen I.T."/>
            <person name="Seshadri R."/>
            <person name="Nelson K.E."/>
            <person name="Eisen J.A."/>
            <person name="Heidelberg J.F."/>
            <person name="Read T.D."/>
            <person name="Dodson R.J."/>
            <person name="Umayam L.A."/>
            <person name="Brinkac L.M."/>
            <person name="Beanan M.J."/>
            <person name="Daugherty S.C."/>
            <person name="DeBoy R.T."/>
            <person name="Durkin A.S."/>
            <person name="Kolonay J.F."/>
            <person name="Madupu R."/>
            <person name="Nelson W.C."/>
            <person name="Ayodeji B."/>
            <person name="Kraul M."/>
            <person name="Shetty J."/>
            <person name="Malek J.A."/>
            <person name="Van Aken S.E."/>
            <person name="Riedmuller S."/>
            <person name="Tettelin H."/>
            <person name="Gill S.R."/>
            <person name="White O."/>
            <person name="Salzberg S.L."/>
            <person name="Hoover D.L."/>
            <person name="Lindler L.E."/>
            <person name="Halling S.M."/>
            <person name="Boyle S.M."/>
            <person name="Fraser C.M."/>
        </authorList>
    </citation>
    <scope>NUCLEOTIDE SEQUENCE [LARGE SCALE GENOMIC DNA]</scope>
    <source>
        <strain>1330</strain>
    </source>
</reference>
<reference key="2">
    <citation type="journal article" date="2011" name="J. Bacteriol.">
        <title>Revised genome sequence of Brucella suis 1330.</title>
        <authorList>
            <person name="Tae H."/>
            <person name="Shallom S."/>
            <person name="Settlage R."/>
            <person name="Preston D."/>
            <person name="Adams L.G."/>
            <person name="Garner H.R."/>
        </authorList>
    </citation>
    <scope>NUCLEOTIDE SEQUENCE [LARGE SCALE GENOMIC DNA]</scope>
    <source>
        <strain>1330</strain>
    </source>
</reference>
<reference key="3">
    <citation type="journal article" date="1999" name="Infect. Immun.">
        <title>Outer membrane proteins Omp10, Omp16, and Omp19 of Brucella spp. are lipoproteins.</title>
        <authorList>
            <person name="Tibor A."/>
            <person name="Decelle B."/>
            <person name="Letesson J.-J."/>
        </authorList>
    </citation>
    <scope>CHARACTERIZATION</scope>
</reference>
<feature type="signal peptide" evidence="1 2">
    <location>
        <begin position="1"/>
        <end position="24"/>
    </location>
</feature>
<feature type="chain" id="PRO_0000020130" description="Peptidoglycan-associated lipoprotein" evidence="1">
    <location>
        <begin position="25"/>
        <end position="168"/>
    </location>
</feature>
<feature type="domain" description="OmpA-like" evidence="1">
    <location>
        <begin position="51"/>
        <end position="167"/>
    </location>
</feature>
<feature type="lipid moiety-binding region" description="N-palmitoyl cysteine" evidence="1">
    <location>
        <position position="25"/>
    </location>
</feature>
<feature type="lipid moiety-binding region" description="S-diacylglycerol cysteine" evidence="1">
    <location>
        <position position="25"/>
    </location>
</feature>
<protein>
    <recommendedName>
        <fullName evidence="1">Peptidoglycan-associated lipoprotein</fullName>
        <shortName evidence="1">PAL</shortName>
    </recommendedName>
    <alternativeName>
        <fullName>16.5 kDa minor OMP</fullName>
        <shortName>16 kDa OMP</shortName>
    </alternativeName>
    <alternativeName>
        <fullName>Minor outer membrane protein Omp16</fullName>
    </alternativeName>
    <alternativeName>
        <fullName>Outer membrane lipoprotein Omp16</fullName>
    </alternativeName>
</protein>
<sequence>MRRIQSIARSPIAIALFMSLAVAGCASKKNLPNNAGDLGLGAGAATPGSSQDFTVNVGDRIFFDLDSSLIRADAQQTLSKQAQWLQRYPQYSITIEGHADERGTREYNLALGQRRAAATRDFLASRGVPTNRMRTISYGNERPVAVCDADTCWSQNRRAVTVLNGAGR</sequence>
<comment type="function">
    <text evidence="1">Part of the Tol-Pal system, which plays a role in outer membrane invagination during cell division and is important for maintaining outer membrane integrity.</text>
</comment>
<comment type="subunit">
    <text evidence="1">The Tol-Pal system is composed of five core proteins: the inner membrane proteins TolA, TolQ and TolR, the periplasmic protein TolB and the outer membrane protein Pal. They form a network linking the inner and outer membranes and the peptidoglycan layer.</text>
</comment>
<comment type="subcellular location">
    <subcellularLocation>
        <location evidence="1">Cell outer membrane</location>
        <topology evidence="1">Lipid-anchor</topology>
    </subcellularLocation>
</comment>
<comment type="PTM">
    <text>The N-terminus is blocked.</text>
</comment>
<comment type="similarity">
    <text evidence="1">Belongs to the Pal lipoprotein family.</text>
</comment>
<evidence type="ECO:0000255" key="1">
    <source>
        <dbReference type="HAMAP-Rule" id="MF_02204"/>
    </source>
</evidence>
<evidence type="ECO:0000305" key="2"/>
<dbReference type="EMBL" id="AE014291">
    <property type="protein sequence ID" value="AAN30595.1"/>
    <property type="molecule type" value="Genomic_DNA"/>
</dbReference>
<dbReference type="EMBL" id="CP002997">
    <property type="protein sequence ID" value="AEM19012.1"/>
    <property type="molecule type" value="Genomic_DNA"/>
</dbReference>
<dbReference type="RefSeq" id="WP_002966947.1">
    <property type="nucleotide sequence ID" value="NZ_KN046804.1"/>
</dbReference>
<dbReference type="SMR" id="P0A3S8"/>
<dbReference type="GeneID" id="97533150"/>
<dbReference type="KEGG" id="bms:BR1695"/>
<dbReference type="KEGG" id="bsi:BS1330_I1689"/>
<dbReference type="PATRIC" id="fig|204722.21.peg.2404"/>
<dbReference type="HOGENOM" id="CLU_016890_9_2_5"/>
<dbReference type="PhylomeDB" id="P0A3S8"/>
<dbReference type="Proteomes" id="UP000007104">
    <property type="component" value="Chromosome I"/>
</dbReference>
<dbReference type="GO" id="GO:0009279">
    <property type="term" value="C:cell outer membrane"/>
    <property type="evidence" value="ECO:0007669"/>
    <property type="project" value="UniProtKB-SubCell"/>
</dbReference>
<dbReference type="GO" id="GO:0051301">
    <property type="term" value="P:cell division"/>
    <property type="evidence" value="ECO:0007669"/>
    <property type="project" value="UniProtKB-UniRule"/>
</dbReference>
<dbReference type="CDD" id="cd07185">
    <property type="entry name" value="OmpA_C-like"/>
    <property type="match status" value="1"/>
</dbReference>
<dbReference type="Gene3D" id="3.30.1330.60">
    <property type="entry name" value="OmpA-like domain"/>
    <property type="match status" value="1"/>
</dbReference>
<dbReference type="HAMAP" id="MF_02204">
    <property type="entry name" value="Pal"/>
    <property type="match status" value="1"/>
</dbReference>
<dbReference type="InterPro" id="IPR050330">
    <property type="entry name" value="Bact_OuterMem_StrucFunc"/>
</dbReference>
<dbReference type="InterPro" id="IPR006664">
    <property type="entry name" value="OMP_bac"/>
</dbReference>
<dbReference type="InterPro" id="IPR006665">
    <property type="entry name" value="OmpA-like"/>
</dbReference>
<dbReference type="InterPro" id="IPR006690">
    <property type="entry name" value="OMPA-like_CS"/>
</dbReference>
<dbReference type="InterPro" id="IPR036737">
    <property type="entry name" value="OmpA-like_sf"/>
</dbReference>
<dbReference type="InterPro" id="IPR039001">
    <property type="entry name" value="Pal"/>
</dbReference>
<dbReference type="InterPro" id="IPR014169">
    <property type="entry name" value="Pal_lipo_C"/>
</dbReference>
<dbReference type="NCBIfam" id="TIGR02802">
    <property type="entry name" value="Pal_lipo"/>
    <property type="match status" value="1"/>
</dbReference>
<dbReference type="PANTHER" id="PTHR30329:SF21">
    <property type="entry name" value="LIPOPROTEIN YIAD-RELATED"/>
    <property type="match status" value="1"/>
</dbReference>
<dbReference type="PANTHER" id="PTHR30329">
    <property type="entry name" value="STATOR ELEMENT OF FLAGELLAR MOTOR COMPLEX"/>
    <property type="match status" value="1"/>
</dbReference>
<dbReference type="Pfam" id="PF00691">
    <property type="entry name" value="OmpA"/>
    <property type="match status" value="1"/>
</dbReference>
<dbReference type="PRINTS" id="PR01021">
    <property type="entry name" value="OMPADOMAIN"/>
</dbReference>
<dbReference type="SUPFAM" id="SSF103088">
    <property type="entry name" value="OmpA-like"/>
    <property type="match status" value="1"/>
</dbReference>
<dbReference type="PROSITE" id="PS01068">
    <property type="entry name" value="OMPA_1"/>
    <property type="match status" value="1"/>
</dbReference>
<dbReference type="PROSITE" id="PS51123">
    <property type="entry name" value="OMPA_2"/>
    <property type="match status" value="1"/>
</dbReference>
<dbReference type="PROSITE" id="PS51257">
    <property type="entry name" value="PROKAR_LIPOPROTEIN"/>
    <property type="match status" value="1"/>
</dbReference>
<accession>P0A3S8</accession>
<accession>G0K6V7</accession>
<accession>Q44662</accession>